<dbReference type="EMBL" id="X01573">
    <property type="protein sequence ID" value="CAA25729.1"/>
    <property type="molecule type" value="Genomic_DNA"/>
</dbReference>
<dbReference type="EMBL" id="Z72625">
    <property type="protein sequence ID" value="CAA96808.1"/>
    <property type="molecule type" value="Genomic_DNA"/>
</dbReference>
<dbReference type="EMBL" id="M19490">
    <property type="protein sequence ID" value="AAA35002.1"/>
    <property type="molecule type" value="Genomic_DNA"/>
</dbReference>
<dbReference type="EMBL" id="BK006941">
    <property type="protein sequence ID" value="DAA08004.1"/>
    <property type="molecule type" value="Genomic_DNA"/>
</dbReference>
<dbReference type="PIR" id="A02782">
    <property type="entry name" value="R6BY29"/>
</dbReference>
<dbReference type="RefSeq" id="NP_011412.1">
    <property type="nucleotide sequence ID" value="NM_001180968.1"/>
</dbReference>
<dbReference type="PDB" id="3J6X">
    <property type="method" value="EM"/>
    <property type="resolution" value="6.10 A"/>
    <property type="chains" value="68=1-149"/>
</dbReference>
<dbReference type="PDB" id="3J6Y">
    <property type="method" value="EM"/>
    <property type="resolution" value="6.10 A"/>
    <property type="chains" value="68=1-149"/>
</dbReference>
<dbReference type="PDB" id="3J77">
    <property type="method" value="EM"/>
    <property type="resolution" value="6.20 A"/>
    <property type="chains" value="78=1-149"/>
</dbReference>
<dbReference type="PDB" id="3J78">
    <property type="method" value="EM"/>
    <property type="resolution" value="6.30 A"/>
    <property type="chains" value="78=1-149"/>
</dbReference>
<dbReference type="PDB" id="3JCT">
    <property type="method" value="EM"/>
    <property type="resolution" value="3.08 A"/>
    <property type="chains" value="a=1-149"/>
</dbReference>
<dbReference type="PDB" id="4U3M">
    <property type="method" value="X-ray"/>
    <property type="resolution" value="3.00 A"/>
    <property type="chains" value="N8/n8=2-149"/>
</dbReference>
<dbReference type="PDB" id="4U3N">
    <property type="method" value="X-ray"/>
    <property type="resolution" value="3.20 A"/>
    <property type="chains" value="N8/n8=2-149"/>
</dbReference>
<dbReference type="PDB" id="4U3U">
    <property type="method" value="X-ray"/>
    <property type="resolution" value="2.90 A"/>
    <property type="chains" value="N8/n8=2-149"/>
</dbReference>
<dbReference type="PDB" id="4U4N">
    <property type="method" value="X-ray"/>
    <property type="resolution" value="3.10 A"/>
    <property type="chains" value="N8/n8=2-149"/>
</dbReference>
<dbReference type="PDB" id="4U4O">
    <property type="method" value="X-ray"/>
    <property type="resolution" value="3.60 A"/>
    <property type="chains" value="N8/n8=2-149"/>
</dbReference>
<dbReference type="PDB" id="4U4Q">
    <property type="method" value="X-ray"/>
    <property type="resolution" value="3.00 A"/>
    <property type="chains" value="N8/n8=2-149"/>
</dbReference>
<dbReference type="PDB" id="4U4R">
    <property type="method" value="X-ray"/>
    <property type="resolution" value="2.80 A"/>
    <property type="chains" value="N8/n8=2-149"/>
</dbReference>
<dbReference type="PDB" id="4U4U">
    <property type="method" value="X-ray"/>
    <property type="resolution" value="3.00 A"/>
    <property type="chains" value="N8/n8=2-149"/>
</dbReference>
<dbReference type="PDB" id="4U4Y">
    <property type="method" value="X-ray"/>
    <property type="resolution" value="3.20 A"/>
    <property type="chains" value="N8/n8=2-149"/>
</dbReference>
<dbReference type="PDB" id="4U4Z">
    <property type="method" value="X-ray"/>
    <property type="resolution" value="3.10 A"/>
    <property type="chains" value="N8/n8=2-149"/>
</dbReference>
<dbReference type="PDB" id="4U50">
    <property type="method" value="X-ray"/>
    <property type="resolution" value="3.20 A"/>
    <property type="chains" value="N8/n8=2-149"/>
</dbReference>
<dbReference type="PDB" id="4U51">
    <property type="method" value="X-ray"/>
    <property type="resolution" value="3.20 A"/>
    <property type="chains" value="N8/n8=2-149"/>
</dbReference>
<dbReference type="PDB" id="4U52">
    <property type="method" value="X-ray"/>
    <property type="resolution" value="3.00 A"/>
    <property type="chains" value="N8/n8=2-149"/>
</dbReference>
<dbReference type="PDB" id="4U53">
    <property type="method" value="X-ray"/>
    <property type="resolution" value="3.30 A"/>
    <property type="chains" value="N8/n8=2-149"/>
</dbReference>
<dbReference type="PDB" id="4U55">
    <property type="method" value="X-ray"/>
    <property type="resolution" value="3.20 A"/>
    <property type="chains" value="N8/n8=2-149"/>
</dbReference>
<dbReference type="PDB" id="4U56">
    <property type="method" value="X-ray"/>
    <property type="resolution" value="3.45 A"/>
    <property type="chains" value="N8/n8=2-149"/>
</dbReference>
<dbReference type="PDB" id="4U6F">
    <property type="method" value="X-ray"/>
    <property type="resolution" value="3.10 A"/>
    <property type="chains" value="N8/n8=2-149"/>
</dbReference>
<dbReference type="PDB" id="4V4B">
    <property type="method" value="EM"/>
    <property type="resolution" value="11.70 A"/>
    <property type="chains" value="BV=2-149"/>
</dbReference>
<dbReference type="PDB" id="4V5Z">
    <property type="method" value="EM"/>
    <property type="resolution" value="8.70 A"/>
    <property type="chains" value="Bl=1-149"/>
</dbReference>
<dbReference type="PDB" id="4V6I">
    <property type="method" value="EM"/>
    <property type="resolution" value="8.80 A"/>
    <property type="chains" value="BO=1-149"/>
</dbReference>
<dbReference type="PDB" id="4V7F">
    <property type="method" value="EM"/>
    <property type="resolution" value="8.70 A"/>
    <property type="chains" value="N=1-149"/>
</dbReference>
<dbReference type="PDB" id="4V7R">
    <property type="method" value="X-ray"/>
    <property type="resolution" value="4.00 A"/>
    <property type="chains" value="BY/DY=1-149"/>
</dbReference>
<dbReference type="PDB" id="4V88">
    <property type="method" value="X-ray"/>
    <property type="resolution" value="3.00 A"/>
    <property type="chains" value="Ba/Da=1-149"/>
</dbReference>
<dbReference type="PDB" id="4V8T">
    <property type="method" value="EM"/>
    <property type="resolution" value="8.10 A"/>
    <property type="chains" value="a=1-149"/>
</dbReference>
<dbReference type="PDB" id="4V8Y">
    <property type="method" value="EM"/>
    <property type="resolution" value="4.30 A"/>
    <property type="chains" value="Ba=2-149"/>
</dbReference>
<dbReference type="PDB" id="4V8Z">
    <property type="method" value="EM"/>
    <property type="resolution" value="6.60 A"/>
    <property type="chains" value="Ba=2-149"/>
</dbReference>
<dbReference type="PDB" id="4V91">
    <property type="method" value="EM"/>
    <property type="resolution" value="3.70 A"/>
    <property type="chains" value="a=1-149"/>
</dbReference>
<dbReference type="PDB" id="5APN">
    <property type="method" value="EM"/>
    <property type="resolution" value="3.91 A"/>
    <property type="chains" value="a=1-149"/>
</dbReference>
<dbReference type="PDB" id="5APO">
    <property type="method" value="EM"/>
    <property type="resolution" value="3.41 A"/>
    <property type="chains" value="a=1-149"/>
</dbReference>
<dbReference type="PDB" id="5DAT">
    <property type="method" value="X-ray"/>
    <property type="resolution" value="3.15 A"/>
    <property type="chains" value="N8/n8=2-149"/>
</dbReference>
<dbReference type="PDB" id="5DC3">
    <property type="method" value="X-ray"/>
    <property type="resolution" value="3.25 A"/>
    <property type="chains" value="N8/n8=2-149"/>
</dbReference>
<dbReference type="PDB" id="5DGE">
    <property type="method" value="X-ray"/>
    <property type="resolution" value="3.45 A"/>
    <property type="chains" value="N8/n8=2-149"/>
</dbReference>
<dbReference type="PDB" id="5DGF">
    <property type="method" value="X-ray"/>
    <property type="resolution" value="3.30 A"/>
    <property type="chains" value="N8/n8=2-149"/>
</dbReference>
<dbReference type="PDB" id="5DGV">
    <property type="method" value="X-ray"/>
    <property type="resolution" value="3.10 A"/>
    <property type="chains" value="N8/n8=2-149"/>
</dbReference>
<dbReference type="PDB" id="5FCI">
    <property type="method" value="X-ray"/>
    <property type="resolution" value="3.40 A"/>
    <property type="chains" value="N8/n8=2-149"/>
</dbReference>
<dbReference type="PDB" id="5FCJ">
    <property type="method" value="X-ray"/>
    <property type="resolution" value="3.10 A"/>
    <property type="chains" value="N8/n8=2-149"/>
</dbReference>
<dbReference type="PDB" id="5GAK">
    <property type="method" value="EM"/>
    <property type="resolution" value="3.88 A"/>
    <property type="chains" value="c=1-149"/>
</dbReference>
<dbReference type="PDB" id="5H4P">
    <property type="method" value="EM"/>
    <property type="resolution" value="3.07 A"/>
    <property type="chains" value="a=1-149"/>
</dbReference>
<dbReference type="PDB" id="5I4L">
    <property type="method" value="X-ray"/>
    <property type="resolution" value="3.10 A"/>
    <property type="chains" value="N8/n8=2-149"/>
</dbReference>
<dbReference type="PDB" id="5JCS">
    <property type="method" value="EM"/>
    <property type="resolution" value="9.50 A"/>
    <property type="chains" value="a=1-149"/>
</dbReference>
<dbReference type="PDB" id="5JUO">
    <property type="method" value="EM"/>
    <property type="resolution" value="4.00 A"/>
    <property type="chains" value="FA=1-149"/>
</dbReference>
<dbReference type="PDB" id="5JUP">
    <property type="method" value="EM"/>
    <property type="resolution" value="3.50 A"/>
    <property type="chains" value="FA=1-149"/>
</dbReference>
<dbReference type="PDB" id="5JUS">
    <property type="method" value="EM"/>
    <property type="resolution" value="4.20 A"/>
    <property type="chains" value="FA=1-149"/>
</dbReference>
<dbReference type="PDB" id="5JUT">
    <property type="method" value="EM"/>
    <property type="resolution" value="4.00 A"/>
    <property type="chains" value="FA=1-149"/>
</dbReference>
<dbReference type="PDB" id="5JUU">
    <property type="method" value="EM"/>
    <property type="resolution" value="4.00 A"/>
    <property type="chains" value="FA=1-149"/>
</dbReference>
<dbReference type="PDB" id="5LYB">
    <property type="method" value="X-ray"/>
    <property type="resolution" value="3.25 A"/>
    <property type="chains" value="N8/n8=2-149"/>
</dbReference>
<dbReference type="PDB" id="5M1J">
    <property type="method" value="EM"/>
    <property type="resolution" value="3.30 A"/>
    <property type="chains" value="a5=2-149"/>
</dbReference>
<dbReference type="PDB" id="5MC6">
    <property type="method" value="EM"/>
    <property type="resolution" value="3.80 A"/>
    <property type="chains" value="AR=1-149"/>
</dbReference>
<dbReference type="PDB" id="5MEI">
    <property type="method" value="X-ray"/>
    <property type="resolution" value="3.50 A"/>
    <property type="chains" value="AB/DC=2-149"/>
</dbReference>
<dbReference type="PDB" id="5NDG">
    <property type="method" value="X-ray"/>
    <property type="resolution" value="3.70 A"/>
    <property type="chains" value="N8/n8=2-149"/>
</dbReference>
<dbReference type="PDB" id="5NDV">
    <property type="method" value="X-ray"/>
    <property type="resolution" value="3.30 A"/>
    <property type="chains" value="N8/n8=2-149"/>
</dbReference>
<dbReference type="PDB" id="5NDW">
    <property type="method" value="X-ray"/>
    <property type="resolution" value="3.70 A"/>
    <property type="chains" value="N8/n8=2-149"/>
</dbReference>
<dbReference type="PDB" id="5OBM">
    <property type="method" value="X-ray"/>
    <property type="resolution" value="3.40 A"/>
    <property type="chains" value="N8/n8=2-149"/>
</dbReference>
<dbReference type="PDB" id="5ON6">
    <property type="method" value="X-ray"/>
    <property type="resolution" value="3.10 A"/>
    <property type="chains" value="AB/DC=2-149"/>
</dbReference>
<dbReference type="PDB" id="5T62">
    <property type="method" value="EM"/>
    <property type="resolution" value="3.30 A"/>
    <property type="chains" value="n=1-149"/>
</dbReference>
<dbReference type="PDB" id="5T6R">
    <property type="method" value="EM"/>
    <property type="resolution" value="4.50 A"/>
    <property type="chains" value="n=1-149"/>
</dbReference>
<dbReference type="PDB" id="5TBW">
    <property type="method" value="X-ray"/>
    <property type="resolution" value="3.00 A"/>
    <property type="chains" value="AB/DC=2-149"/>
</dbReference>
<dbReference type="PDB" id="5TGA">
    <property type="method" value="X-ray"/>
    <property type="resolution" value="3.30 A"/>
    <property type="chains" value="N8/n8=2-149"/>
</dbReference>
<dbReference type="PDB" id="5TGM">
    <property type="method" value="X-ray"/>
    <property type="resolution" value="3.50 A"/>
    <property type="chains" value="N8/n8=2-149"/>
</dbReference>
<dbReference type="PDB" id="6ELZ">
    <property type="method" value="EM"/>
    <property type="resolution" value="3.30 A"/>
    <property type="chains" value="a=1-149"/>
</dbReference>
<dbReference type="PDB" id="6FT6">
    <property type="method" value="EM"/>
    <property type="resolution" value="3.90 A"/>
    <property type="chains" value="a=1-149"/>
</dbReference>
<dbReference type="PDB" id="6GQ1">
    <property type="method" value="EM"/>
    <property type="resolution" value="4.40 A"/>
    <property type="chains" value="a=2-149"/>
</dbReference>
<dbReference type="PDB" id="6GQB">
    <property type="method" value="EM"/>
    <property type="resolution" value="3.90 A"/>
    <property type="chains" value="a=2-149"/>
</dbReference>
<dbReference type="PDB" id="6GQV">
    <property type="method" value="EM"/>
    <property type="resolution" value="4.00 A"/>
    <property type="chains" value="a=2-149"/>
</dbReference>
<dbReference type="PDB" id="6HD7">
    <property type="method" value="EM"/>
    <property type="resolution" value="3.40 A"/>
    <property type="chains" value="c=1-149"/>
</dbReference>
<dbReference type="PDB" id="6HHQ">
    <property type="method" value="X-ray"/>
    <property type="resolution" value="3.10 A"/>
    <property type="chains" value="AB/DC=1-149"/>
</dbReference>
<dbReference type="PDB" id="6I7O">
    <property type="method" value="EM"/>
    <property type="resolution" value="5.30 A"/>
    <property type="chains" value="AR/XR=2-149"/>
</dbReference>
<dbReference type="PDB" id="6M62">
    <property type="method" value="EM"/>
    <property type="resolution" value="3.20 A"/>
    <property type="chains" value="a=1-149"/>
</dbReference>
<dbReference type="PDB" id="6N8J">
    <property type="method" value="EM"/>
    <property type="resolution" value="3.50 A"/>
    <property type="chains" value="a=1-149"/>
</dbReference>
<dbReference type="PDB" id="6N8K">
    <property type="method" value="EM"/>
    <property type="resolution" value="3.60 A"/>
    <property type="chains" value="a=1-149"/>
</dbReference>
<dbReference type="PDB" id="6N8L">
    <property type="method" value="EM"/>
    <property type="resolution" value="3.60 A"/>
    <property type="chains" value="a=1-149"/>
</dbReference>
<dbReference type="PDB" id="6N8M">
    <property type="method" value="EM"/>
    <property type="resolution" value="3.50 A"/>
    <property type="chains" value="n=1-149"/>
</dbReference>
<dbReference type="PDB" id="6N8N">
    <property type="method" value="EM"/>
    <property type="resolution" value="3.80 A"/>
    <property type="chains" value="n=1-149"/>
</dbReference>
<dbReference type="PDB" id="6N8O">
    <property type="method" value="EM"/>
    <property type="resolution" value="3.50 A"/>
    <property type="chains" value="n=1-149"/>
</dbReference>
<dbReference type="PDB" id="6OIG">
    <property type="method" value="EM"/>
    <property type="resolution" value="3.80 A"/>
    <property type="chains" value="a=2-149"/>
</dbReference>
<dbReference type="PDB" id="6Q8Y">
    <property type="method" value="EM"/>
    <property type="resolution" value="3.10 A"/>
    <property type="chains" value="AR=2-149"/>
</dbReference>
<dbReference type="PDB" id="6QIK">
    <property type="method" value="EM"/>
    <property type="resolution" value="3.10 A"/>
    <property type="chains" value="N=1-149"/>
</dbReference>
<dbReference type="PDB" id="6QT0">
    <property type="method" value="EM"/>
    <property type="resolution" value="3.40 A"/>
    <property type="chains" value="N=1-149"/>
</dbReference>
<dbReference type="PDB" id="6QTZ">
    <property type="method" value="EM"/>
    <property type="resolution" value="3.50 A"/>
    <property type="chains" value="N=1-149"/>
</dbReference>
<dbReference type="PDB" id="6R84">
    <property type="method" value="EM"/>
    <property type="resolution" value="3.60 A"/>
    <property type="chains" value="c=2-149"/>
</dbReference>
<dbReference type="PDB" id="6R86">
    <property type="method" value="EM"/>
    <property type="resolution" value="3.40 A"/>
    <property type="chains" value="c=2-149"/>
</dbReference>
<dbReference type="PDB" id="6R87">
    <property type="method" value="EM"/>
    <property type="resolution" value="3.40 A"/>
    <property type="chains" value="c=2-149"/>
</dbReference>
<dbReference type="PDB" id="6RI5">
    <property type="method" value="EM"/>
    <property type="resolution" value="3.30 A"/>
    <property type="chains" value="N=1-149"/>
</dbReference>
<dbReference type="PDB" id="6RZZ">
    <property type="method" value="EM"/>
    <property type="resolution" value="3.20 A"/>
    <property type="chains" value="N=1-149"/>
</dbReference>
<dbReference type="PDB" id="6S05">
    <property type="method" value="EM"/>
    <property type="resolution" value="3.90 A"/>
    <property type="chains" value="N=1-149"/>
</dbReference>
<dbReference type="PDB" id="6S47">
    <property type="method" value="EM"/>
    <property type="resolution" value="3.28 A"/>
    <property type="chains" value="Ac=2-149"/>
</dbReference>
<dbReference type="PDB" id="6SNT">
    <property type="method" value="EM"/>
    <property type="resolution" value="2.80 A"/>
    <property type="chains" value="ap=1-149"/>
</dbReference>
<dbReference type="PDB" id="6SV4">
    <property type="method" value="EM"/>
    <property type="resolution" value="3.30 A"/>
    <property type="chains" value="AR/XR/zR=1-149"/>
</dbReference>
<dbReference type="PDB" id="6T4Q">
    <property type="method" value="EM"/>
    <property type="resolution" value="2.60 A"/>
    <property type="chains" value="La=2-149"/>
</dbReference>
<dbReference type="PDB" id="6T7I">
    <property type="method" value="EM"/>
    <property type="resolution" value="3.20 A"/>
    <property type="chains" value="La=1-149"/>
</dbReference>
<dbReference type="PDB" id="6T7T">
    <property type="method" value="EM"/>
    <property type="resolution" value="3.10 A"/>
    <property type="chains" value="La=1-149"/>
</dbReference>
<dbReference type="PDB" id="6T83">
    <property type="method" value="EM"/>
    <property type="resolution" value="4.00 A"/>
    <property type="chains" value="L/ay=1-149"/>
</dbReference>
<dbReference type="PDB" id="6TB3">
    <property type="method" value="EM"/>
    <property type="resolution" value="2.80 A"/>
    <property type="chains" value="AR=2-149"/>
</dbReference>
<dbReference type="PDB" id="6TNU">
    <property type="method" value="EM"/>
    <property type="resolution" value="3.10 A"/>
    <property type="chains" value="AR=2-149"/>
</dbReference>
<dbReference type="PDB" id="6WOO">
    <property type="method" value="EM"/>
    <property type="resolution" value="2.90 A"/>
    <property type="chains" value="a=2-148"/>
</dbReference>
<dbReference type="PDB" id="6XIQ">
    <property type="method" value="EM"/>
    <property type="resolution" value="4.20 A"/>
    <property type="chains" value="a=1-149"/>
</dbReference>
<dbReference type="PDB" id="6XIR">
    <property type="method" value="EM"/>
    <property type="resolution" value="3.20 A"/>
    <property type="chains" value="a=1-149"/>
</dbReference>
<dbReference type="PDB" id="6YLG">
    <property type="method" value="EM"/>
    <property type="resolution" value="3.00 A"/>
    <property type="chains" value="a=1-149"/>
</dbReference>
<dbReference type="PDB" id="6YLH">
    <property type="method" value="EM"/>
    <property type="resolution" value="3.10 A"/>
    <property type="chains" value="a=1-149"/>
</dbReference>
<dbReference type="PDB" id="6YLX">
    <property type="method" value="EM"/>
    <property type="resolution" value="3.90 A"/>
    <property type="chains" value="a=1-149"/>
</dbReference>
<dbReference type="PDB" id="6YLY">
    <property type="method" value="EM"/>
    <property type="resolution" value="3.80 A"/>
    <property type="chains" value="a=1-149"/>
</dbReference>
<dbReference type="PDB" id="6Z6J">
    <property type="method" value="EM"/>
    <property type="resolution" value="3.40 A"/>
    <property type="chains" value="La=1-149"/>
</dbReference>
<dbReference type="PDB" id="6Z6K">
    <property type="method" value="EM"/>
    <property type="resolution" value="3.40 A"/>
    <property type="chains" value="La=1-149"/>
</dbReference>
<dbReference type="PDB" id="7AZY">
    <property type="method" value="EM"/>
    <property type="resolution" value="2.88 A"/>
    <property type="chains" value="S=1-149"/>
</dbReference>
<dbReference type="PDB" id="7B7D">
    <property type="method" value="EM"/>
    <property type="resolution" value="3.30 A"/>
    <property type="chains" value="LW=2-149"/>
</dbReference>
<dbReference type="PDB" id="7BT6">
    <property type="method" value="EM"/>
    <property type="resolution" value="3.12 A"/>
    <property type="chains" value="a=1-149"/>
</dbReference>
<dbReference type="PDB" id="7BTB">
    <property type="method" value="EM"/>
    <property type="resolution" value="3.22 A"/>
    <property type="chains" value="a=1-149"/>
</dbReference>
<dbReference type="PDB" id="7MPI">
    <property type="method" value="EM"/>
    <property type="resolution" value="3.05 A"/>
    <property type="chains" value="Aa=2-149"/>
</dbReference>
<dbReference type="PDB" id="7MPJ">
    <property type="method" value="EM"/>
    <property type="resolution" value="2.70 A"/>
    <property type="chains" value="Aa=2-149"/>
</dbReference>
<dbReference type="PDB" id="7N8B">
    <property type="method" value="EM"/>
    <property type="resolution" value="3.05 A"/>
    <property type="chains" value="Aa=2-149"/>
</dbReference>
<dbReference type="PDB" id="7NRC">
    <property type="method" value="EM"/>
    <property type="resolution" value="3.90 A"/>
    <property type="chains" value="Lc=2-149"/>
</dbReference>
<dbReference type="PDB" id="7NRD">
    <property type="method" value="EM"/>
    <property type="resolution" value="4.36 A"/>
    <property type="chains" value="Lc=2-149"/>
</dbReference>
<dbReference type="PDB" id="7OF1">
    <property type="method" value="EM"/>
    <property type="resolution" value="3.10 A"/>
    <property type="chains" value="a=1-149"/>
</dbReference>
<dbReference type="PDB" id="7OH3">
    <property type="method" value="EM"/>
    <property type="resolution" value="3.40 A"/>
    <property type="chains" value="a=1-149"/>
</dbReference>
<dbReference type="PDB" id="7OHQ">
    <property type="method" value="EM"/>
    <property type="resolution" value="3.10 A"/>
    <property type="chains" value="a=1-149"/>
</dbReference>
<dbReference type="PDB" id="7OHV">
    <property type="method" value="EM"/>
    <property type="resolution" value="3.90 A"/>
    <property type="chains" value="a=1-149"/>
</dbReference>
<dbReference type="PDB" id="7TOO">
    <property type="method" value="EM"/>
    <property type="resolution" value="2.70 A"/>
    <property type="chains" value="AL28=1-149"/>
</dbReference>
<dbReference type="PDB" id="7TOP">
    <property type="method" value="EM"/>
    <property type="resolution" value="2.40 A"/>
    <property type="chains" value="AL28=1-149"/>
</dbReference>
<dbReference type="PDB" id="7U0H">
    <property type="method" value="EM"/>
    <property type="resolution" value="2.76 A"/>
    <property type="chains" value="a=1-149"/>
</dbReference>
<dbReference type="PDB" id="7UG6">
    <property type="method" value="EM"/>
    <property type="resolution" value="2.90 A"/>
    <property type="chains" value="a=1-149"/>
</dbReference>
<dbReference type="PDB" id="7UOO">
    <property type="method" value="EM"/>
    <property type="resolution" value="2.34 A"/>
    <property type="chains" value="a=1-149"/>
</dbReference>
<dbReference type="PDB" id="7UQB">
    <property type="method" value="EM"/>
    <property type="resolution" value="2.43 A"/>
    <property type="chains" value="a=1-149"/>
</dbReference>
<dbReference type="PDB" id="7UQZ">
    <property type="method" value="EM"/>
    <property type="resolution" value="2.44 A"/>
    <property type="chains" value="a=1-149"/>
</dbReference>
<dbReference type="PDB" id="7V08">
    <property type="method" value="EM"/>
    <property type="resolution" value="2.36 A"/>
    <property type="chains" value="a=1-149"/>
</dbReference>
<dbReference type="PDB" id="7Z34">
    <property type="method" value="EM"/>
    <property type="resolution" value="3.80 A"/>
    <property type="chains" value="K=1-149"/>
</dbReference>
<dbReference type="PDB" id="7ZPQ">
    <property type="method" value="EM"/>
    <property type="resolution" value="3.47 A"/>
    <property type="chains" value="BZ=2-149"/>
</dbReference>
<dbReference type="PDB" id="7ZRS">
    <property type="method" value="EM"/>
    <property type="resolution" value="4.80 A"/>
    <property type="chains" value="BZ=2-149"/>
</dbReference>
<dbReference type="PDB" id="7ZS5">
    <property type="method" value="EM"/>
    <property type="resolution" value="3.20 A"/>
    <property type="chains" value="Bb=2-149"/>
</dbReference>
<dbReference type="PDB" id="7ZUW">
    <property type="method" value="EM"/>
    <property type="resolution" value="4.30 A"/>
    <property type="chains" value="BZ=2-149"/>
</dbReference>
<dbReference type="PDB" id="7ZUX">
    <property type="method" value="EM"/>
    <property type="resolution" value="2.50 A"/>
    <property type="chains" value="EZ=2-149"/>
</dbReference>
<dbReference type="PDB" id="7ZW0">
    <property type="method" value="EM"/>
    <property type="resolution" value="2.40 A"/>
    <property type="chains" value="Ld=1-149"/>
</dbReference>
<dbReference type="PDB" id="8AAF">
    <property type="method" value="EM"/>
    <property type="resolution" value="2.50 A"/>
    <property type="chains" value="N=1-149"/>
</dbReference>
<dbReference type="PDB" id="8AGT">
    <property type="method" value="EM"/>
    <property type="resolution" value="2.60 A"/>
    <property type="chains" value="N=1-149"/>
</dbReference>
<dbReference type="PDB" id="8AGU">
    <property type="method" value="EM"/>
    <property type="resolution" value="2.70 A"/>
    <property type="chains" value="N=1-149"/>
</dbReference>
<dbReference type="PDB" id="8AGV">
    <property type="method" value="EM"/>
    <property type="resolution" value="2.60 A"/>
    <property type="chains" value="N=1-149"/>
</dbReference>
<dbReference type="PDB" id="8AGW">
    <property type="method" value="EM"/>
    <property type="resolution" value="2.60 A"/>
    <property type="chains" value="N=1-149"/>
</dbReference>
<dbReference type="PDB" id="8AGX">
    <property type="method" value="EM"/>
    <property type="resolution" value="2.40 A"/>
    <property type="chains" value="N=1-149"/>
</dbReference>
<dbReference type="PDB" id="8AGZ">
    <property type="method" value="EM"/>
    <property type="resolution" value="2.60 A"/>
    <property type="chains" value="N=1-149"/>
</dbReference>
<dbReference type="PDB" id="8BIP">
    <property type="method" value="EM"/>
    <property type="resolution" value="3.10 A"/>
    <property type="chains" value="La=2-149"/>
</dbReference>
<dbReference type="PDB" id="8BJQ">
    <property type="method" value="EM"/>
    <property type="resolution" value="3.80 A"/>
    <property type="chains" value="La=2-149"/>
</dbReference>
<dbReference type="PDB" id="8BN3">
    <property type="method" value="EM"/>
    <property type="resolution" value="2.40 A"/>
    <property type="chains" value="N8=2-149"/>
</dbReference>
<dbReference type="PDB" id="8BQD">
    <property type="method" value="EM"/>
    <property type="resolution" value="3.90 A"/>
    <property type="chains" value="AR=2-149"/>
</dbReference>
<dbReference type="PDB" id="8BQX">
    <property type="method" value="EM"/>
    <property type="resolution" value="3.80 A"/>
    <property type="chains" value="AR=2-149"/>
</dbReference>
<dbReference type="PDB" id="8CCS">
    <property type="method" value="EM"/>
    <property type="resolution" value="1.97 A"/>
    <property type="chains" value="M=1-149"/>
</dbReference>
<dbReference type="PDB" id="8CDL">
    <property type="method" value="EM"/>
    <property type="resolution" value="2.72 A"/>
    <property type="chains" value="M=1-149"/>
</dbReference>
<dbReference type="PDB" id="8CDR">
    <property type="method" value="EM"/>
    <property type="resolution" value="2.04 A"/>
    <property type="chains" value="M=1-149"/>
</dbReference>
<dbReference type="PDB" id="8CEH">
    <property type="method" value="EM"/>
    <property type="resolution" value="2.05 A"/>
    <property type="chains" value="M=1-149"/>
</dbReference>
<dbReference type="PDB" id="8CF5">
    <property type="method" value="EM"/>
    <property type="resolution" value="2.71 A"/>
    <property type="chains" value="M=1-149"/>
</dbReference>
<dbReference type="PDB" id="8CG8">
    <property type="method" value="EM"/>
    <property type="resolution" value="2.57 A"/>
    <property type="chains" value="M=1-149"/>
</dbReference>
<dbReference type="PDB" id="8CGN">
    <property type="method" value="EM"/>
    <property type="resolution" value="2.28 A"/>
    <property type="chains" value="M=1-149"/>
</dbReference>
<dbReference type="PDB" id="8CIV">
    <property type="method" value="EM"/>
    <property type="resolution" value="2.47 A"/>
    <property type="chains" value="M=1-149"/>
</dbReference>
<dbReference type="PDB" id="8CKU">
    <property type="method" value="EM"/>
    <property type="resolution" value="3.11 A"/>
    <property type="chains" value="M=1-149"/>
</dbReference>
<dbReference type="PDB" id="8CMJ">
    <property type="method" value="EM"/>
    <property type="resolution" value="3.79 A"/>
    <property type="chains" value="M=1-149"/>
</dbReference>
<dbReference type="PDB" id="8EUB">
    <property type="method" value="EM"/>
    <property type="resolution" value="2.52 A"/>
    <property type="chains" value="Aa=1-149"/>
</dbReference>
<dbReference type="PDB" id="8EVP">
    <property type="method" value="EM"/>
    <property type="resolution" value="2.38 A"/>
    <property type="chains" value="Aa=1-149"/>
</dbReference>
<dbReference type="PDB" id="8EVQ">
    <property type="method" value="EM"/>
    <property type="resolution" value="2.72 A"/>
    <property type="chains" value="Aa=1-149"/>
</dbReference>
<dbReference type="PDB" id="8EVR">
    <property type="method" value="EM"/>
    <property type="resolution" value="2.87 A"/>
    <property type="chains" value="Aa=1-149"/>
</dbReference>
<dbReference type="PDB" id="8EVS">
    <property type="method" value="EM"/>
    <property type="resolution" value="2.62 A"/>
    <property type="chains" value="Aa=1-149"/>
</dbReference>
<dbReference type="PDB" id="8EVT">
    <property type="method" value="EM"/>
    <property type="resolution" value="2.20 A"/>
    <property type="chains" value="Aa=1-149"/>
</dbReference>
<dbReference type="PDB" id="8EWB">
    <property type="method" value="EM"/>
    <property type="resolution" value="2.87 A"/>
    <property type="chains" value="Aa=1-149"/>
</dbReference>
<dbReference type="PDB" id="8EWC">
    <property type="method" value="EM"/>
    <property type="resolution" value="2.45 A"/>
    <property type="chains" value="Aa=1-149"/>
</dbReference>
<dbReference type="PDB" id="8HFR">
    <property type="method" value="EM"/>
    <property type="resolution" value="2.64 A"/>
    <property type="chains" value="aw=1-149"/>
</dbReference>
<dbReference type="PDB" id="8K2D">
    <property type="method" value="EM"/>
    <property type="resolution" value="3.20 A"/>
    <property type="chains" value="La=1-149"/>
</dbReference>
<dbReference type="PDB" id="8K82">
    <property type="method" value="EM"/>
    <property type="resolution" value="3.00 A"/>
    <property type="chains" value="La=1-149"/>
</dbReference>
<dbReference type="PDB" id="8P4V">
    <property type="method" value="X-ray"/>
    <property type="resolution" value="3.16 A"/>
    <property type="chains" value="AB/DC=1-149"/>
</dbReference>
<dbReference type="PDB" id="8P8M">
    <property type="method" value="EM"/>
    <property type="resolution" value="2.66 A"/>
    <property type="chains" value="RA=1-149"/>
</dbReference>
<dbReference type="PDB" id="8P8N">
    <property type="method" value="EM"/>
    <property type="resolution" value="2.15 A"/>
    <property type="chains" value="RA=1-149"/>
</dbReference>
<dbReference type="PDB" id="8P8U">
    <property type="method" value="EM"/>
    <property type="resolution" value="2.23 A"/>
    <property type="chains" value="RA=1-149"/>
</dbReference>
<dbReference type="PDB" id="8P9A">
    <property type="method" value="X-ray"/>
    <property type="resolution" value="2.90 A"/>
    <property type="chains" value="AB/DC=1-149"/>
</dbReference>
<dbReference type="PDB" id="8PFR">
    <property type="method" value="EM"/>
    <property type="resolution" value="2.15 A"/>
    <property type="chains" value="RA=1-149"/>
</dbReference>
<dbReference type="PDB" id="8T2X">
    <property type="method" value="EM"/>
    <property type="resolution" value="2.46 A"/>
    <property type="chains" value="Aa=1-149"/>
</dbReference>
<dbReference type="PDB" id="8T2Y">
    <property type="method" value="EM"/>
    <property type="resolution" value="2.20 A"/>
    <property type="chains" value="Aa=1-149"/>
</dbReference>
<dbReference type="PDB" id="8T2Z">
    <property type="method" value="EM"/>
    <property type="resolution" value="2.40 A"/>
    <property type="chains" value="Aa=1-149"/>
</dbReference>
<dbReference type="PDB" id="8T30">
    <property type="method" value="EM"/>
    <property type="resolution" value="2.88 A"/>
    <property type="chains" value="Aa=1-149"/>
</dbReference>
<dbReference type="PDB" id="8T3A">
    <property type="method" value="EM"/>
    <property type="resolution" value="2.86 A"/>
    <property type="chains" value="Aa=1-149"/>
</dbReference>
<dbReference type="PDB" id="8T3B">
    <property type="method" value="EM"/>
    <property type="resolution" value="3.08 A"/>
    <property type="chains" value="Aa=1-149"/>
</dbReference>
<dbReference type="PDB" id="8T3C">
    <property type="method" value="EM"/>
    <property type="resolution" value="3.86 A"/>
    <property type="chains" value="Aa=1-149"/>
</dbReference>
<dbReference type="PDB" id="8T3D">
    <property type="method" value="EM"/>
    <property type="resolution" value="2.95 A"/>
    <property type="chains" value="Aa=1-149"/>
</dbReference>
<dbReference type="PDB" id="8T3E">
    <property type="method" value="EM"/>
    <property type="resolution" value="3.04 A"/>
    <property type="chains" value="Aa=1-149"/>
</dbReference>
<dbReference type="PDB" id="8T3F">
    <property type="method" value="EM"/>
    <property type="resolution" value="3.09 A"/>
    <property type="chains" value="Aa=1-149"/>
</dbReference>
<dbReference type="PDB" id="8UT0">
    <property type="method" value="EM"/>
    <property type="resolution" value="3.22 A"/>
    <property type="chains" value="Lc=2-149"/>
</dbReference>
<dbReference type="PDB" id="8UTI">
    <property type="method" value="EM"/>
    <property type="resolution" value="3.13 A"/>
    <property type="chains" value="Lc=2-149"/>
</dbReference>
<dbReference type="PDB" id="8XU8">
    <property type="method" value="EM"/>
    <property type="resolution" value="3.40 A"/>
    <property type="chains" value="c=2-149"/>
</dbReference>
<dbReference type="PDB" id="8Y0U">
    <property type="method" value="EM"/>
    <property type="resolution" value="3.59 A"/>
    <property type="chains" value="La=1-149"/>
</dbReference>
<dbReference type="PDB" id="8YLD">
    <property type="method" value="EM"/>
    <property type="resolution" value="3.90 A"/>
    <property type="chains" value="c=2-149"/>
</dbReference>
<dbReference type="PDB" id="8YLR">
    <property type="method" value="EM"/>
    <property type="resolution" value="3.90 A"/>
    <property type="chains" value="c=2-149"/>
</dbReference>
<dbReference type="PDB" id="8Z70">
    <property type="method" value="EM"/>
    <property type="resolution" value="3.20 A"/>
    <property type="chains" value="c=2-149"/>
</dbReference>
<dbReference type="PDB" id="8Z71">
    <property type="method" value="EM"/>
    <property type="resolution" value="3.60 A"/>
    <property type="chains" value="c=2-149"/>
</dbReference>
<dbReference type="PDB" id="9F9S">
    <property type="method" value="EM"/>
    <property type="resolution" value="2.90 A"/>
    <property type="chains" value="Lq/Mq=1-149"/>
</dbReference>
<dbReference type="PDBsum" id="3J6X"/>
<dbReference type="PDBsum" id="3J6Y"/>
<dbReference type="PDBsum" id="3J77"/>
<dbReference type="PDBsum" id="3J78"/>
<dbReference type="PDBsum" id="3JCT"/>
<dbReference type="PDBsum" id="4U3M"/>
<dbReference type="PDBsum" id="4U3N"/>
<dbReference type="PDBsum" id="4U3U"/>
<dbReference type="PDBsum" id="4U4N"/>
<dbReference type="PDBsum" id="4U4O"/>
<dbReference type="PDBsum" id="4U4Q"/>
<dbReference type="PDBsum" id="4U4R"/>
<dbReference type="PDBsum" id="4U4U"/>
<dbReference type="PDBsum" id="4U4Y"/>
<dbReference type="PDBsum" id="4U4Z"/>
<dbReference type="PDBsum" id="4U50"/>
<dbReference type="PDBsum" id="4U51"/>
<dbReference type="PDBsum" id="4U52"/>
<dbReference type="PDBsum" id="4U53"/>
<dbReference type="PDBsum" id="4U55"/>
<dbReference type="PDBsum" id="4U56"/>
<dbReference type="PDBsum" id="4U6F"/>
<dbReference type="PDBsum" id="4V4B"/>
<dbReference type="PDBsum" id="4V5Z"/>
<dbReference type="PDBsum" id="4V6I"/>
<dbReference type="PDBsum" id="4V7F"/>
<dbReference type="PDBsum" id="4V7R"/>
<dbReference type="PDBsum" id="4V88"/>
<dbReference type="PDBsum" id="4V8T"/>
<dbReference type="PDBsum" id="4V8Y"/>
<dbReference type="PDBsum" id="4V8Z"/>
<dbReference type="PDBsum" id="4V91"/>
<dbReference type="PDBsum" id="5APN"/>
<dbReference type="PDBsum" id="5APO"/>
<dbReference type="PDBsum" id="5DAT"/>
<dbReference type="PDBsum" id="5DC3"/>
<dbReference type="PDBsum" id="5DGE"/>
<dbReference type="PDBsum" id="5DGF"/>
<dbReference type="PDBsum" id="5DGV"/>
<dbReference type="PDBsum" id="5FCI"/>
<dbReference type="PDBsum" id="5FCJ"/>
<dbReference type="PDBsum" id="5GAK"/>
<dbReference type="PDBsum" id="5H4P"/>
<dbReference type="PDBsum" id="5I4L"/>
<dbReference type="PDBsum" id="5JCS"/>
<dbReference type="PDBsum" id="5JUO"/>
<dbReference type="PDBsum" id="5JUP"/>
<dbReference type="PDBsum" id="5JUS"/>
<dbReference type="PDBsum" id="5JUT"/>
<dbReference type="PDBsum" id="5JUU"/>
<dbReference type="PDBsum" id="5LYB"/>
<dbReference type="PDBsum" id="5M1J"/>
<dbReference type="PDBsum" id="5MC6"/>
<dbReference type="PDBsum" id="5MEI"/>
<dbReference type="PDBsum" id="5NDG"/>
<dbReference type="PDBsum" id="5NDV"/>
<dbReference type="PDBsum" id="5NDW"/>
<dbReference type="PDBsum" id="5OBM"/>
<dbReference type="PDBsum" id="5ON6"/>
<dbReference type="PDBsum" id="5T62"/>
<dbReference type="PDBsum" id="5T6R"/>
<dbReference type="PDBsum" id="5TBW"/>
<dbReference type="PDBsum" id="5TGA"/>
<dbReference type="PDBsum" id="5TGM"/>
<dbReference type="PDBsum" id="6ELZ"/>
<dbReference type="PDBsum" id="6FT6"/>
<dbReference type="PDBsum" id="6GQ1"/>
<dbReference type="PDBsum" id="6GQB"/>
<dbReference type="PDBsum" id="6GQV"/>
<dbReference type="PDBsum" id="6HD7"/>
<dbReference type="PDBsum" id="6HHQ"/>
<dbReference type="PDBsum" id="6I7O"/>
<dbReference type="PDBsum" id="6M62"/>
<dbReference type="PDBsum" id="6N8J"/>
<dbReference type="PDBsum" id="6N8K"/>
<dbReference type="PDBsum" id="6N8L"/>
<dbReference type="PDBsum" id="6N8M"/>
<dbReference type="PDBsum" id="6N8N"/>
<dbReference type="PDBsum" id="6N8O"/>
<dbReference type="PDBsum" id="6OIG"/>
<dbReference type="PDBsum" id="6Q8Y"/>
<dbReference type="PDBsum" id="6QIK"/>
<dbReference type="PDBsum" id="6QT0"/>
<dbReference type="PDBsum" id="6QTZ"/>
<dbReference type="PDBsum" id="6R84"/>
<dbReference type="PDBsum" id="6R86"/>
<dbReference type="PDBsum" id="6R87"/>
<dbReference type="PDBsum" id="6RI5"/>
<dbReference type="PDBsum" id="6RZZ"/>
<dbReference type="PDBsum" id="6S05"/>
<dbReference type="PDBsum" id="6S47"/>
<dbReference type="PDBsum" id="6SNT"/>
<dbReference type="PDBsum" id="6SV4"/>
<dbReference type="PDBsum" id="6T4Q"/>
<dbReference type="PDBsum" id="6T7I"/>
<dbReference type="PDBsum" id="6T7T"/>
<dbReference type="PDBsum" id="6T83"/>
<dbReference type="PDBsum" id="6TB3"/>
<dbReference type="PDBsum" id="6TNU"/>
<dbReference type="PDBsum" id="6WOO"/>
<dbReference type="PDBsum" id="6XIQ"/>
<dbReference type="PDBsum" id="6XIR"/>
<dbReference type="PDBsum" id="6YLG"/>
<dbReference type="PDBsum" id="6YLH"/>
<dbReference type="PDBsum" id="6YLX"/>
<dbReference type="PDBsum" id="6YLY"/>
<dbReference type="PDBsum" id="6Z6J"/>
<dbReference type="PDBsum" id="6Z6K"/>
<dbReference type="PDBsum" id="7AZY"/>
<dbReference type="PDBsum" id="7B7D"/>
<dbReference type="PDBsum" id="7BT6"/>
<dbReference type="PDBsum" id="7BTB"/>
<dbReference type="PDBsum" id="7MPI"/>
<dbReference type="PDBsum" id="7MPJ"/>
<dbReference type="PDBsum" id="7N8B"/>
<dbReference type="PDBsum" id="7NRC"/>
<dbReference type="PDBsum" id="7NRD"/>
<dbReference type="PDBsum" id="7OF1"/>
<dbReference type="PDBsum" id="7OH3"/>
<dbReference type="PDBsum" id="7OHQ"/>
<dbReference type="PDBsum" id="7OHV"/>
<dbReference type="PDBsum" id="7TOO"/>
<dbReference type="PDBsum" id="7TOP"/>
<dbReference type="PDBsum" id="7U0H"/>
<dbReference type="PDBsum" id="7UG6"/>
<dbReference type="PDBsum" id="7UOO"/>
<dbReference type="PDBsum" id="7UQB"/>
<dbReference type="PDBsum" id="7UQZ"/>
<dbReference type="PDBsum" id="7V08"/>
<dbReference type="PDBsum" id="7Z34"/>
<dbReference type="PDBsum" id="7ZPQ"/>
<dbReference type="PDBsum" id="7ZRS"/>
<dbReference type="PDBsum" id="7ZS5"/>
<dbReference type="PDBsum" id="7ZUW"/>
<dbReference type="PDBsum" id="7ZUX"/>
<dbReference type="PDBsum" id="7ZW0"/>
<dbReference type="PDBsum" id="8AAF"/>
<dbReference type="PDBsum" id="8AGT"/>
<dbReference type="PDBsum" id="8AGU"/>
<dbReference type="PDBsum" id="8AGV"/>
<dbReference type="PDBsum" id="8AGW"/>
<dbReference type="PDBsum" id="8AGX"/>
<dbReference type="PDBsum" id="8AGZ"/>
<dbReference type="PDBsum" id="8BIP"/>
<dbReference type="PDBsum" id="8BJQ"/>
<dbReference type="PDBsum" id="8BN3"/>
<dbReference type="PDBsum" id="8BQD"/>
<dbReference type="PDBsum" id="8BQX"/>
<dbReference type="PDBsum" id="8CCS"/>
<dbReference type="PDBsum" id="8CDL"/>
<dbReference type="PDBsum" id="8CDR"/>
<dbReference type="PDBsum" id="8CEH"/>
<dbReference type="PDBsum" id="8CF5"/>
<dbReference type="PDBsum" id="8CG8"/>
<dbReference type="PDBsum" id="8CGN"/>
<dbReference type="PDBsum" id="8CIV"/>
<dbReference type="PDBsum" id="8CKU"/>
<dbReference type="PDBsum" id="8CMJ"/>
<dbReference type="PDBsum" id="8EUB"/>
<dbReference type="PDBsum" id="8EVP"/>
<dbReference type="PDBsum" id="8EVQ"/>
<dbReference type="PDBsum" id="8EVR"/>
<dbReference type="PDBsum" id="8EVS"/>
<dbReference type="PDBsum" id="8EVT"/>
<dbReference type="PDBsum" id="8EWB"/>
<dbReference type="PDBsum" id="8EWC"/>
<dbReference type="PDBsum" id="8HFR"/>
<dbReference type="PDBsum" id="8K2D"/>
<dbReference type="PDBsum" id="8K82"/>
<dbReference type="PDBsum" id="8P4V"/>
<dbReference type="PDBsum" id="8P8M"/>
<dbReference type="PDBsum" id="8P8N"/>
<dbReference type="PDBsum" id="8P8U"/>
<dbReference type="PDBsum" id="8P9A"/>
<dbReference type="PDBsum" id="8PFR"/>
<dbReference type="PDBsum" id="8T2X"/>
<dbReference type="PDBsum" id="8T2Y"/>
<dbReference type="PDBsum" id="8T2Z"/>
<dbReference type="PDBsum" id="8T30"/>
<dbReference type="PDBsum" id="8T3A"/>
<dbReference type="PDBsum" id="8T3B"/>
<dbReference type="PDBsum" id="8T3C"/>
<dbReference type="PDBsum" id="8T3D"/>
<dbReference type="PDBsum" id="8T3E"/>
<dbReference type="PDBsum" id="8T3F"/>
<dbReference type="PDBsum" id="8UT0"/>
<dbReference type="PDBsum" id="8UTI"/>
<dbReference type="PDBsum" id="8XU8"/>
<dbReference type="PDBsum" id="8Y0U"/>
<dbReference type="PDBsum" id="8YLD"/>
<dbReference type="PDBsum" id="8YLR"/>
<dbReference type="PDBsum" id="8Z70"/>
<dbReference type="PDBsum" id="8Z71"/>
<dbReference type="PDBsum" id="9F9S"/>
<dbReference type="EMDB" id="EMD-0047"/>
<dbReference type="EMDB" id="EMD-0048"/>
<dbReference type="EMDB" id="EMD-0049"/>
<dbReference type="EMDB" id="EMD-0202"/>
<dbReference type="EMDB" id="EMD-0369"/>
<dbReference type="EMDB" id="EMD-0370"/>
<dbReference type="EMDB" id="EMD-0371"/>
<dbReference type="EMDB" id="EMD-0372"/>
<dbReference type="EMDB" id="EMD-0373"/>
<dbReference type="EMDB" id="EMD-0374"/>
<dbReference type="EMDB" id="EMD-10068"/>
<dbReference type="EMDB" id="EMD-10071"/>
<dbReference type="EMDB" id="EMD-10098"/>
<dbReference type="EMDB" id="EMD-10262"/>
<dbReference type="EMDB" id="EMD-10315"/>
<dbReference type="EMDB" id="EMD-10377"/>
<dbReference type="EMDB" id="EMD-10396"/>
<dbReference type="EMDB" id="EMD-10397"/>
<dbReference type="EMDB" id="EMD-10398"/>
<dbReference type="EMDB" id="EMD-10431"/>
<dbReference type="EMDB" id="EMD-10537"/>
<dbReference type="EMDB" id="EMD-10838"/>
<dbReference type="EMDB" id="EMD-10839"/>
<dbReference type="EMDB" id="EMD-10841"/>
<dbReference type="EMDB" id="EMD-10842"/>
<dbReference type="EMDB" id="EMD-11096"/>
<dbReference type="EMDB" id="EMD-11097"/>
<dbReference type="EMDB" id="EMD-11951"/>
<dbReference type="EMDB" id="EMD-12081"/>
<dbReference type="EMDB" id="EMD-12534"/>
<dbReference type="EMDB" id="EMD-12535"/>
<dbReference type="EMDB" id="EMD-12866"/>
<dbReference type="EMDB" id="EMD-12892"/>
<dbReference type="EMDB" id="EMD-12905"/>
<dbReference type="EMDB" id="EMD-12910"/>
<dbReference type="EMDB" id="EMD-14471"/>
<dbReference type="EMDB" id="EMD-14861"/>
<dbReference type="EMDB" id="EMD-14921"/>
<dbReference type="EMDB" id="EMD-14926"/>
<dbReference type="EMDB" id="EMD-14978"/>
<dbReference type="EMDB" id="EMD-14979"/>
<dbReference type="EMDB" id="EMD-14990"/>
<dbReference type="EMDB" id="EMD-15296"/>
<dbReference type="EMDB" id="EMD-15423"/>
<dbReference type="EMDB" id="EMD-15424"/>
<dbReference type="EMDB" id="EMD-15425"/>
<dbReference type="EMDB" id="EMD-15426"/>
<dbReference type="EMDB" id="EMD-15427"/>
<dbReference type="EMDB" id="EMD-15428"/>
<dbReference type="EMDB" id="EMD-16086"/>
<dbReference type="EMDB" id="EMD-16090"/>
<dbReference type="EMDB" id="EMD-16127"/>
<dbReference type="EMDB" id="EMD-16182"/>
<dbReference type="EMDB" id="EMD-16191"/>
<dbReference type="EMDB" id="EMD-16563"/>
<dbReference type="EMDB" id="EMD-16591"/>
<dbReference type="EMDB" id="EMD-16594"/>
<dbReference type="EMDB" id="EMD-16609"/>
<dbReference type="EMDB" id="EMD-16616"/>
<dbReference type="EMDB" id="EMD-16634"/>
<dbReference type="EMDB" id="EMD-16648"/>
<dbReference type="EMDB" id="EMD-16684"/>
<dbReference type="EMDB" id="EMD-16702"/>
<dbReference type="EMDB" id="EMD-16729"/>
<dbReference type="EMDB" id="EMD-17549"/>
<dbReference type="EMDB" id="EMD-17550"/>
<dbReference type="EMDB" id="EMD-17552"/>
<dbReference type="EMDB" id="EMD-17653"/>
<dbReference type="EMDB" id="EMD-20077"/>
<dbReference type="EMDB" id="EMD-21859"/>
<dbReference type="EMDB" id="EMD-22196"/>
<dbReference type="EMDB" id="EMD-22198"/>
<dbReference type="EMDB" id="EMD-23934"/>
<dbReference type="EMDB" id="EMD-23935"/>
<dbReference type="EMDB" id="EMD-24235"/>
<dbReference type="EMDB" id="EMD-26033"/>
<dbReference type="EMDB" id="EMD-26034"/>
<dbReference type="EMDB" id="EMD-26259"/>
<dbReference type="EMDB" id="EMD-26485"/>
<dbReference type="EMDB" id="EMD-26651"/>
<dbReference type="EMDB" id="EMD-26686"/>
<dbReference type="EMDB" id="EMD-26703"/>
<dbReference type="EMDB" id="EMD-26941"/>
<dbReference type="EMDB" id="EMD-28610"/>
<dbReference type="EMDB" id="EMD-28632"/>
<dbReference type="EMDB" id="EMD-28633"/>
<dbReference type="EMDB" id="EMD-28634"/>
<dbReference type="EMDB" id="EMD-28635"/>
<dbReference type="EMDB" id="EMD-28636"/>
<dbReference type="EMDB" id="EMD-28642"/>
<dbReference type="EMDB" id="EMD-28643"/>
<dbReference type="EMDB" id="EMD-30108"/>
<dbReference type="EMDB" id="EMD-30170"/>
<dbReference type="EMDB" id="EMD-30174"/>
<dbReference type="EMDB" id="EMD-3461"/>
<dbReference type="EMDB" id="EMD-34725"/>
<dbReference type="EMDB" id="EMD-36839"/>
<dbReference type="EMDB" id="EMD-36945"/>
<dbReference type="EMDB" id="EMD-38660"/>
<dbReference type="EMDB" id="EMD-40990"/>
<dbReference type="EMDB" id="EMD-40991"/>
<dbReference type="EMDB" id="EMD-40992"/>
<dbReference type="EMDB" id="EMD-40993"/>
<dbReference type="EMDB" id="EMD-40997"/>
<dbReference type="EMDB" id="EMD-40998"/>
<dbReference type="EMDB" id="EMD-40999"/>
<dbReference type="EMDB" id="EMD-41000"/>
<dbReference type="EMDB" id="EMD-41001"/>
<dbReference type="EMDB" id="EMD-41002"/>
<dbReference type="EMDB" id="EMD-4140"/>
<dbReference type="EMDB" id="EMD-42525"/>
<dbReference type="EMDB" id="EMD-42540"/>
<dbReference type="EMDB" id="EMD-4302"/>
<dbReference type="EMDB" id="EMD-4427"/>
<dbReference type="EMDB" id="EMD-4474"/>
<dbReference type="EMDB" id="EMD-4560"/>
<dbReference type="EMDB" id="EMD-4630"/>
<dbReference type="EMDB" id="EMD-4636"/>
<dbReference type="EMDB" id="EMD-4751"/>
<dbReference type="EMDB" id="EMD-4752"/>
<dbReference type="EMDB" id="EMD-4753"/>
<dbReference type="EMDB" id="EMD-4884"/>
<dbReference type="EMDB" id="EMD-50259"/>
<dbReference type="EMDB" id="EMD-8362"/>
<dbReference type="EMDB" id="EMD-8368"/>
<dbReference type="SMR" id="P02406"/>
<dbReference type="BioGRID" id="33147">
    <property type="interactions" value="371"/>
</dbReference>
<dbReference type="ComplexPortal" id="CPX-1601">
    <property type="entry name" value="60S cytosolic large ribosomal subunit"/>
</dbReference>
<dbReference type="ELM" id="P02406"/>
<dbReference type="FunCoup" id="P02406">
    <property type="interactions" value="1276"/>
</dbReference>
<dbReference type="IntAct" id="P02406">
    <property type="interactions" value="76"/>
</dbReference>
<dbReference type="MINT" id="P02406"/>
<dbReference type="STRING" id="4932.YGL103W"/>
<dbReference type="CarbonylDB" id="P02406"/>
<dbReference type="iPTMnet" id="P02406"/>
<dbReference type="PaxDb" id="4932-YGL103W"/>
<dbReference type="PeptideAtlas" id="P02406"/>
<dbReference type="EnsemblFungi" id="YGL103W_mRNA">
    <property type="protein sequence ID" value="YGL103W"/>
    <property type="gene ID" value="YGL103W"/>
</dbReference>
<dbReference type="GeneID" id="852775"/>
<dbReference type="KEGG" id="sce:YGL103W"/>
<dbReference type="AGR" id="SGD:S000003071"/>
<dbReference type="SGD" id="S000003071">
    <property type="gene designation" value="RPL28"/>
</dbReference>
<dbReference type="VEuPathDB" id="FungiDB:YGL103W"/>
<dbReference type="eggNOG" id="KOG1742">
    <property type="taxonomic scope" value="Eukaryota"/>
</dbReference>
<dbReference type="GeneTree" id="ENSGT00390000005534"/>
<dbReference type="HOGENOM" id="CLU_109163_1_0_1"/>
<dbReference type="InParanoid" id="P02406"/>
<dbReference type="OMA" id="WGRVGQH"/>
<dbReference type="OrthoDB" id="61900at2759"/>
<dbReference type="BioCyc" id="YEAST:G3O-30602-MONOMER"/>
<dbReference type="Reactome" id="R-SCE-156827">
    <property type="pathway name" value="L13a-mediated translational silencing of Ceruloplasmin expression"/>
</dbReference>
<dbReference type="Reactome" id="R-SCE-1799339">
    <property type="pathway name" value="SRP-dependent cotranslational protein targeting to membrane"/>
</dbReference>
<dbReference type="Reactome" id="R-SCE-72689">
    <property type="pathway name" value="Formation of a pool of free 40S subunits"/>
</dbReference>
<dbReference type="Reactome" id="R-SCE-72706">
    <property type="pathway name" value="GTP hydrolysis and joining of the 60S ribosomal subunit"/>
</dbReference>
<dbReference type="Reactome" id="R-SCE-975956">
    <property type="pathway name" value="Nonsense Mediated Decay (NMD) independent of the Exon Junction Complex (EJC)"/>
</dbReference>
<dbReference type="Reactome" id="R-SCE-975957">
    <property type="pathway name" value="Nonsense Mediated Decay (NMD) enhanced by the Exon Junction Complex (EJC)"/>
</dbReference>
<dbReference type="BioGRID-ORCS" id="852775">
    <property type="hits" value="2 hits in 10 CRISPR screens"/>
</dbReference>
<dbReference type="PRO" id="PR:P02406"/>
<dbReference type="Proteomes" id="UP000002311">
    <property type="component" value="Chromosome VII"/>
</dbReference>
<dbReference type="RNAct" id="P02406">
    <property type="molecule type" value="protein"/>
</dbReference>
<dbReference type="GO" id="GO:0005737">
    <property type="term" value="C:cytoplasm"/>
    <property type="evidence" value="ECO:0000303"/>
    <property type="project" value="ComplexPortal"/>
</dbReference>
<dbReference type="GO" id="GO:0005829">
    <property type="term" value="C:cytosol"/>
    <property type="evidence" value="ECO:0000304"/>
    <property type="project" value="Reactome"/>
</dbReference>
<dbReference type="GO" id="GO:0022625">
    <property type="term" value="C:cytosolic large ribosomal subunit"/>
    <property type="evidence" value="ECO:0000314"/>
    <property type="project" value="SGD"/>
</dbReference>
<dbReference type="GO" id="GO:0005634">
    <property type="term" value="C:nucleus"/>
    <property type="evidence" value="ECO:0000315"/>
    <property type="project" value="SGD"/>
</dbReference>
<dbReference type="GO" id="GO:0003723">
    <property type="term" value="F:RNA binding"/>
    <property type="evidence" value="ECO:0000314"/>
    <property type="project" value="SGD"/>
</dbReference>
<dbReference type="GO" id="GO:0003735">
    <property type="term" value="F:structural constituent of ribosome"/>
    <property type="evidence" value="ECO:0000318"/>
    <property type="project" value="GO_Central"/>
</dbReference>
<dbReference type="GO" id="GO:0002181">
    <property type="term" value="P:cytoplasmic translation"/>
    <property type="evidence" value="ECO:0000303"/>
    <property type="project" value="ComplexPortal"/>
</dbReference>
<dbReference type="FunFam" id="3.100.10.10:FF:000002">
    <property type="entry name" value="60S ribosomal protein L27a"/>
    <property type="match status" value="1"/>
</dbReference>
<dbReference type="Gene3D" id="3.100.10.10">
    <property type="match status" value="1"/>
</dbReference>
<dbReference type="HAMAP" id="MF_01341">
    <property type="entry name" value="Ribosomal_uL15"/>
    <property type="match status" value="1"/>
</dbReference>
<dbReference type="InterPro" id="IPR030878">
    <property type="entry name" value="Ribosomal_uL15"/>
</dbReference>
<dbReference type="InterPro" id="IPR021131">
    <property type="entry name" value="Ribosomal_uL15/eL18"/>
</dbReference>
<dbReference type="InterPro" id="IPR036227">
    <property type="entry name" value="Ribosomal_uL15/eL18_sf"/>
</dbReference>
<dbReference type="InterPro" id="IPR001196">
    <property type="entry name" value="Ribosomal_uL15_CS"/>
</dbReference>
<dbReference type="PANTHER" id="PTHR11721">
    <property type="entry name" value="60S RIBOSOMAL PROTEIN L27A"/>
    <property type="match status" value="1"/>
</dbReference>
<dbReference type="PANTHER" id="PTHR11721:SF3">
    <property type="entry name" value="LARGE RIBOSOMAL SUBUNIT PROTEIN UL15"/>
    <property type="match status" value="1"/>
</dbReference>
<dbReference type="Pfam" id="PF00828">
    <property type="entry name" value="Ribosomal_L27A"/>
    <property type="match status" value="1"/>
</dbReference>
<dbReference type="SUPFAM" id="SSF52080">
    <property type="entry name" value="Ribosomal proteins L15p and L18e"/>
    <property type="match status" value="1"/>
</dbReference>
<dbReference type="PROSITE" id="PS00475">
    <property type="entry name" value="RIBOSOMAL_L15"/>
    <property type="match status" value="1"/>
</dbReference>
<gene>
    <name evidence="7" type="primary">RPL28</name>
    <name type="synonym">CYH2</name>
    <name type="ordered locus">YGL103W</name>
</gene>
<name>RL28_YEAST</name>
<evidence type="ECO:0000256" key="1">
    <source>
        <dbReference type="SAM" id="MobiDB-lite"/>
    </source>
</evidence>
<evidence type="ECO:0000269" key="2">
    <source>
    </source>
</evidence>
<evidence type="ECO:0000269" key="3">
    <source>
    </source>
</evidence>
<evidence type="ECO:0000269" key="4">
    <source>
    </source>
</evidence>
<evidence type="ECO:0000269" key="5">
    <source>
    </source>
</evidence>
<evidence type="ECO:0000303" key="6">
    <source>
    </source>
</evidence>
<evidence type="ECO:0000303" key="7">
    <source>
    </source>
</evidence>
<evidence type="ECO:0000305" key="8"/>
<evidence type="ECO:0000305" key="9">
    <source>
    </source>
</evidence>
<evidence type="ECO:0000305" key="10">
    <source>
    </source>
</evidence>
<evidence type="ECO:0007744" key="11">
    <source>
    </source>
</evidence>
<evidence type="ECO:0007829" key="12">
    <source>
        <dbReference type="PDB" id="4U4R"/>
    </source>
</evidence>
<accession>P02406</accession>
<accession>D6VU43</accession>
<sequence>MPSRFTKTRKHRGHVSAGKGRIGKHRKHPGGRGMAGGQHHHRINMDKYHPGYFGKVGMRYFHKQQAHFWKPVLNLDKLWTLIPEDKRDQYLKSASKETAPVIDTLAAGYGKILGKGRIPNVPVIVKARFVSKLAEEKIRAAGGVVELIA</sequence>
<organism>
    <name type="scientific">Saccharomyces cerevisiae (strain ATCC 204508 / S288c)</name>
    <name type="common">Baker's yeast</name>
    <dbReference type="NCBI Taxonomy" id="559292"/>
    <lineage>
        <taxon>Eukaryota</taxon>
        <taxon>Fungi</taxon>
        <taxon>Dikarya</taxon>
        <taxon>Ascomycota</taxon>
        <taxon>Saccharomycotina</taxon>
        <taxon>Saccharomycetes</taxon>
        <taxon>Saccharomycetales</taxon>
        <taxon>Saccharomycetaceae</taxon>
        <taxon>Saccharomyces</taxon>
    </lineage>
</organism>
<proteinExistence type="evidence at protein level"/>
<feature type="initiator methionine" description="Removed" evidence="2">
    <location>
        <position position="1"/>
    </location>
</feature>
<feature type="chain" id="PRO_0000104904" description="Large ribosomal subunit protein uL15">
    <location>
        <begin position="2"/>
        <end position="149"/>
    </location>
</feature>
<feature type="region of interest" description="Disordered" evidence="1">
    <location>
        <begin position="1"/>
        <end position="39"/>
    </location>
</feature>
<feature type="short sequence motif" description="Nuclear localization signal" evidence="3">
    <location>
        <begin position="7"/>
        <end position="13"/>
    </location>
</feature>
<feature type="short sequence motif" description="Nuclear localization signal" evidence="3">
    <location>
        <begin position="24"/>
        <end position="30"/>
    </location>
</feature>
<feature type="compositionally biased region" description="Basic residues" evidence="1">
    <location>
        <begin position="1"/>
        <end position="14"/>
    </location>
</feature>
<feature type="compositionally biased region" description="Basic residues" evidence="1">
    <location>
        <begin position="21"/>
        <end position="30"/>
    </location>
</feature>
<feature type="cross-link" description="Glycyl lysine isopeptide (Lys-Gly) (interchain with G-Cter in ubiquitin)" evidence="11">
    <location>
        <position position="96"/>
    </location>
</feature>
<feature type="sequence variant" description="Confers resistance to cycloheximide, an inhibitor of polypeptide elongation." evidence="5">
    <original>Q</original>
    <variation>E</variation>
    <location>
        <position position="38"/>
    </location>
</feature>
<feature type="helix" evidence="12">
    <location>
        <begin position="3"/>
        <end position="5"/>
    </location>
</feature>
<feature type="helix" evidence="12">
    <location>
        <begin position="7"/>
        <end position="11"/>
    </location>
</feature>
<feature type="strand" evidence="12">
    <location>
        <begin position="14"/>
        <end position="16"/>
    </location>
</feature>
<feature type="helix" evidence="12">
    <location>
        <begin position="17"/>
        <end position="19"/>
    </location>
</feature>
<feature type="strand" evidence="12">
    <location>
        <begin position="21"/>
        <end position="23"/>
    </location>
</feature>
<feature type="turn" evidence="12">
    <location>
        <begin position="33"/>
        <end position="41"/>
    </location>
</feature>
<feature type="helix" evidence="12">
    <location>
        <begin position="42"/>
        <end position="45"/>
    </location>
</feature>
<feature type="turn" evidence="12">
    <location>
        <begin position="46"/>
        <end position="48"/>
    </location>
</feature>
<feature type="turn" evidence="12">
    <location>
        <begin position="65"/>
        <end position="68"/>
    </location>
</feature>
<feature type="strand" evidence="12">
    <location>
        <begin position="72"/>
        <end position="74"/>
    </location>
</feature>
<feature type="turn" evidence="12">
    <location>
        <begin position="75"/>
        <end position="78"/>
    </location>
</feature>
<feature type="helix" evidence="12">
    <location>
        <begin position="79"/>
        <end position="81"/>
    </location>
</feature>
<feature type="helix" evidence="12">
    <location>
        <begin position="84"/>
        <end position="91"/>
    </location>
</feature>
<feature type="strand" evidence="12">
    <location>
        <begin position="96"/>
        <end position="98"/>
    </location>
</feature>
<feature type="strand" evidence="12">
    <location>
        <begin position="101"/>
        <end position="103"/>
    </location>
</feature>
<feature type="turn" evidence="12">
    <location>
        <begin position="104"/>
        <end position="108"/>
    </location>
</feature>
<feature type="strand" evidence="12">
    <location>
        <begin position="110"/>
        <end position="113"/>
    </location>
</feature>
<feature type="strand" evidence="12">
    <location>
        <begin position="124"/>
        <end position="130"/>
    </location>
</feature>
<feature type="helix" evidence="12">
    <location>
        <begin position="132"/>
        <end position="140"/>
    </location>
</feature>
<feature type="strand" evidence="12">
    <location>
        <begin position="144"/>
        <end position="147"/>
    </location>
</feature>
<reference key="1">
    <citation type="journal article" date="1983" name="Nucleic Acids Res.">
        <title>Cycloheximide resistance in yeast: the gene and its protein.</title>
        <authorList>
            <person name="Kaufer N.F."/>
            <person name="Fried H.M."/>
            <person name="Schwindinger W.F."/>
            <person name="Jasin M."/>
            <person name="Warner J.R."/>
        </authorList>
    </citation>
    <scope>NUCLEOTIDE SEQUENCE [GENOMIC DNA]</scope>
    <scope>VARIANT GLU-38</scope>
</reference>
<reference key="2">
    <citation type="journal article" date="1997" name="Yeast">
        <title>Sequence analysis of 203 kilobases from Saccharomyces cerevisiae chromosome VII.</title>
        <authorList>
            <person name="Rieger M."/>
            <person name="Brueckner M."/>
            <person name="Schaefer M."/>
            <person name="Mueller-Auer S."/>
        </authorList>
    </citation>
    <scope>NUCLEOTIDE SEQUENCE [GENOMIC DNA]</scope>
    <source>
        <strain>ATCC 204508 / S288c</strain>
    </source>
</reference>
<reference key="3">
    <citation type="journal article" date="1997" name="Nature">
        <title>The nucleotide sequence of Saccharomyces cerevisiae chromosome VII.</title>
        <authorList>
            <person name="Tettelin H."/>
            <person name="Agostoni-Carbone M.L."/>
            <person name="Albermann K."/>
            <person name="Albers M."/>
            <person name="Arroyo J."/>
            <person name="Backes U."/>
            <person name="Barreiros T."/>
            <person name="Bertani I."/>
            <person name="Bjourson A.J."/>
            <person name="Brueckner M."/>
            <person name="Bruschi C.V."/>
            <person name="Carignani G."/>
            <person name="Castagnoli L."/>
            <person name="Cerdan E."/>
            <person name="Clemente M.L."/>
            <person name="Coblenz A."/>
            <person name="Coglievina M."/>
            <person name="Coissac E."/>
            <person name="Defoor E."/>
            <person name="Del Bino S."/>
            <person name="Delius H."/>
            <person name="Delneri D."/>
            <person name="de Wergifosse P."/>
            <person name="Dujon B."/>
            <person name="Durand P."/>
            <person name="Entian K.-D."/>
            <person name="Eraso P."/>
            <person name="Escribano V."/>
            <person name="Fabiani L."/>
            <person name="Fartmann B."/>
            <person name="Feroli F."/>
            <person name="Feuermann M."/>
            <person name="Frontali L."/>
            <person name="Garcia-Gonzalez M."/>
            <person name="Garcia-Saez M.I."/>
            <person name="Goffeau A."/>
            <person name="Guerreiro P."/>
            <person name="Hani J."/>
            <person name="Hansen M."/>
            <person name="Hebling U."/>
            <person name="Hernandez K."/>
            <person name="Heumann K."/>
            <person name="Hilger F."/>
            <person name="Hofmann B."/>
            <person name="Indge K.J."/>
            <person name="James C.M."/>
            <person name="Klima R."/>
            <person name="Koetter P."/>
            <person name="Kramer B."/>
            <person name="Kramer W."/>
            <person name="Lauquin G."/>
            <person name="Leuther H."/>
            <person name="Louis E.J."/>
            <person name="Maillier E."/>
            <person name="Marconi A."/>
            <person name="Martegani E."/>
            <person name="Mazon M.J."/>
            <person name="Mazzoni C."/>
            <person name="McReynolds A.D.K."/>
            <person name="Melchioretto P."/>
            <person name="Mewes H.-W."/>
            <person name="Minenkova O."/>
            <person name="Mueller-Auer S."/>
            <person name="Nawrocki A."/>
            <person name="Netter P."/>
            <person name="Neu R."/>
            <person name="Nombela C."/>
            <person name="Oliver S.G."/>
            <person name="Panzeri L."/>
            <person name="Paoluzi S."/>
            <person name="Plevani P."/>
            <person name="Portetelle D."/>
            <person name="Portillo F."/>
            <person name="Potier S."/>
            <person name="Purnelle B."/>
            <person name="Rieger M."/>
            <person name="Riles L."/>
            <person name="Rinaldi T."/>
            <person name="Robben J."/>
            <person name="Rodrigues-Pousada C."/>
            <person name="Rodriguez-Belmonte E."/>
            <person name="Rodriguez-Torres A.M."/>
            <person name="Rose M."/>
            <person name="Ruzzi M."/>
            <person name="Saliola M."/>
            <person name="Sanchez-Perez M."/>
            <person name="Schaefer B."/>
            <person name="Schaefer M."/>
            <person name="Scharfe M."/>
            <person name="Schmidheini T."/>
            <person name="Schreer A."/>
            <person name="Skala J."/>
            <person name="Souciet J.-L."/>
            <person name="Steensma H.Y."/>
            <person name="Talla E."/>
            <person name="Thierry A."/>
            <person name="Vandenbol M."/>
            <person name="van der Aart Q.J.M."/>
            <person name="Van Dyck L."/>
            <person name="Vanoni M."/>
            <person name="Verhasselt P."/>
            <person name="Voet M."/>
            <person name="Volckaert G."/>
            <person name="Wambutt R."/>
            <person name="Watson M.D."/>
            <person name="Weber N."/>
            <person name="Wedler E."/>
            <person name="Wedler H."/>
            <person name="Wipfli P."/>
            <person name="Wolf K."/>
            <person name="Wright L.F."/>
            <person name="Zaccaria P."/>
            <person name="Zimmermann M."/>
            <person name="Zollner A."/>
            <person name="Kleine K."/>
        </authorList>
    </citation>
    <scope>NUCLEOTIDE SEQUENCE [LARGE SCALE GENOMIC DNA]</scope>
    <source>
        <strain>ATCC 204508 / S288c</strain>
    </source>
</reference>
<reference key="4">
    <citation type="journal article" date="2014" name="G3 (Bethesda)">
        <title>The reference genome sequence of Saccharomyces cerevisiae: Then and now.</title>
        <authorList>
            <person name="Engel S.R."/>
            <person name="Dietrich F.S."/>
            <person name="Fisk D.G."/>
            <person name="Binkley G."/>
            <person name="Balakrishnan R."/>
            <person name="Costanzo M.C."/>
            <person name="Dwight S.S."/>
            <person name="Hitz B.C."/>
            <person name="Karra K."/>
            <person name="Nash R.S."/>
            <person name="Weng S."/>
            <person name="Wong E.D."/>
            <person name="Lloyd P."/>
            <person name="Skrzypek M.S."/>
            <person name="Miyasato S.R."/>
            <person name="Simison M."/>
            <person name="Cherry J.M."/>
        </authorList>
    </citation>
    <scope>GENOME REANNOTATION</scope>
    <source>
        <strain>ATCC 204508 / S288c</strain>
    </source>
</reference>
<reference key="5">
    <citation type="journal article" date="1987" name="J. Biol. Chem.">
        <title>Transcriptional elements of the yeast ribosomal protein gene CYH2.</title>
        <authorList>
            <person name="Schwindinger W.F."/>
            <person name="Warner J.R."/>
        </authorList>
    </citation>
    <scope>NUCLEOTIDE SEQUENCE [GENOMIC DNA] OF 1-16</scope>
</reference>
<reference key="6">
    <citation type="journal article" date="1990" name="EMBO J.">
        <title>Characterization of nuclear localizing sequences derived from yeast ribosomal protein L29.</title>
        <authorList>
            <person name="Underwood M.R."/>
            <person name="Fried H.M."/>
        </authorList>
    </citation>
    <scope>NUCLEAR LOCALIZATION SIGNAL</scope>
</reference>
<reference key="7">
    <citation type="journal article" date="1998" name="Yeast">
        <title>The list of cytoplasmic ribosomal proteins of Saccharomyces cerevisiae.</title>
        <authorList>
            <person name="Planta R.J."/>
            <person name="Mager W.H."/>
        </authorList>
    </citation>
    <scope>NOMENCLATURE</scope>
    <scope>SUBUNIT</scope>
</reference>
<reference key="8">
    <citation type="journal article" date="1999" name="J. Biol. Chem.">
        <title>The action of N-terminal acetyltransferases on yeast ribosomal proteins.</title>
        <authorList>
            <person name="Arnold R.J."/>
            <person name="Polevoda B."/>
            <person name="Reilly J.P."/>
            <person name="Sherman F."/>
        </authorList>
    </citation>
    <scope>CLEAVAGE OF INITIATOR METHIONINE</scope>
</reference>
<reference key="9">
    <citation type="journal article" date="2012" name="Proteomics">
        <title>Sites of ubiquitin attachment in Saccharomyces cerevisiae.</title>
        <authorList>
            <person name="Starita L.M."/>
            <person name="Lo R.S."/>
            <person name="Eng J.K."/>
            <person name="von Haller P.D."/>
            <person name="Fields S."/>
        </authorList>
    </citation>
    <scope>UBIQUITINATION [LARGE SCALE ANALYSIS] AT LYS-96</scope>
    <scope>IDENTIFICATION BY MASS SPECTROMETRY [LARGE SCALE ANALYSIS]</scope>
</reference>
<reference key="10">
    <citation type="journal article" date="2014" name="Curr. Opin. Struct. Biol.">
        <title>A new system for naming ribosomal proteins.</title>
        <authorList>
            <person name="Ban N."/>
            <person name="Beckmann R."/>
            <person name="Cate J.H.D."/>
            <person name="Dinman J.D."/>
            <person name="Dragon F."/>
            <person name="Ellis S.R."/>
            <person name="Lafontaine D.L.J."/>
            <person name="Lindahl L."/>
            <person name="Liljas A."/>
            <person name="Lipton J.M."/>
            <person name="McAlear M.A."/>
            <person name="Moore P.B."/>
            <person name="Noller H.F."/>
            <person name="Ortega J."/>
            <person name="Panse V.G."/>
            <person name="Ramakrishnan V."/>
            <person name="Spahn C.M.T."/>
            <person name="Steitz T.A."/>
            <person name="Tchorzewski M."/>
            <person name="Tollervey D."/>
            <person name="Warren A.J."/>
            <person name="Williamson J.R."/>
            <person name="Wilson D."/>
            <person name="Yonath A."/>
            <person name="Yusupov M."/>
        </authorList>
    </citation>
    <scope>NOMENCLATURE</scope>
</reference>
<reference key="11">
    <citation type="journal article" date="2001" name="Cell">
        <title>Structure of the 80S ribosome from Saccharomyces cerevisiae -- tRNA-ribosome and subunit-subunit interactions.</title>
        <authorList>
            <person name="Spahn C.M.T."/>
            <person name="Beckmann R."/>
            <person name="Eswar N."/>
            <person name="Penczek P.A."/>
            <person name="Sali A."/>
            <person name="Blobel G."/>
            <person name="Frank J."/>
        </authorList>
    </citation>
    <scope>3D-STRUCTURE MODELING OF 6-148</scope>
    <scope>ELECTRON MICROSCOPY</scope>
</reference>
<reference key="12">
    <citation type="journal article" date="2004" name="EMBO J.">
        <title>Domain movements of elongation factor eEF2 and the eukaryotic 80S ribosome facilitate tRNA translocation.</title>
        <authorList>
            <person name="Spahn C.M.T."/>
            <person name="Gomez-Lorenzo M.G."/>
            <person name="Grassucci R.A."/>
            <person name="Joergensen R."/>
            <person name="Andersen G.R."/>
            <person name="Beckmann R."/>
            <person name="Penczek P.A."/>
            <person name="Ballesta J.P.G."/>
            <person name="Frank J."/>
        </authorList>
    </citation>
    <scope>3D-STRUCTURE MODELING</scope>
    <scope>ELECTRON MICROSCOPY</scope>
</reference>
<reference key="13">
    <citation type="journal article" date="2010" name="Science">
        <title>Crystal structure of the eukaryotic ribosome.</title>
        <authorList>
            <person name="Ben-Shem A."/>
            <person name="Jenner L."/>
            <person name="Yusupova G."/>
            <person name="Yusupov M."/>
        </authorList>
    </citation>
    <scope>X-RAY CRYSTALLOGRAPHY (4.0 ANGSTROMS) OF 80S RIBOSOME</scope>
</reference>
<reference key="14">
    <citation type="journal article" date="2011" name="Science">
        <title>The structure of the eukaryotic ribosome at 3.0 A resolution.</title>
        <authorList>
            <person name="Ben-Shem A."/>
            <person name="Garreau de Loubresse N."/>
            <person name="Melnikov S."/>
            <person name="Jenner L."/>
            <person name="Yusupova G."/>
            <person name="Yusupov M."/>
        </authorList>
    </citation>
    <scope>X-RAY CRYSTALLOGRAPHY (3.0 ANGSTROMS) OF 80S RIBOSOME</scope>
    <scope>SUBUNIT</scope>
    <scope>SUBCELLULAR LOCATION</scope>
</reference>
<keyword id="KW-0002">3D-structure</keyword>
<keyword id="KW-0963">Cytoplasm</keyword>
<keyword id="KW-1017">Isopeptide bond</keyword>
<keyword id="KW-1185">Reference proteome</keyword>
<keyword id="KW-0687">Ribonucleoprotein</keyword>
<keyword id="KW-0689">Ribosomal protein</keyword>
<keyword id="KW-0832">Ubl conjugation</keyword>
<comment type="function">
    <text evidence="9">Component of the ribosome, a large ribonucleoprotein complex responsible for the synthesis of proteins in the cell. The small ribosomal subunit (SSU) binds messenger RNAs (mRNAs) and translates the encoded message by selecting cognate aminoacyl-transfer RNA (tRNA) molecules. The large subunit (LSU) contains the ribosomal catalytic site termed the peptidyl transferase center (PTC), which catalyzes the formation of peptide bonds, thereby polymerizing the amino acids delivered by tRNAs into a polypeptide chain. The nascent polypeptides leave the ribosome through a tunnel in the LSU and interact with protein factors that function in enzymatic processing, targeting, and the membrane insertion of nascent chains at the exit of the ribosomal tunnel.</text>
</comment>
<comment type="subunit">
    <text evidence="4 10">Component of the large ribosomal subunit (LSU). Mature yeast ribosomes consist of a small (40S) and a large (60S) subunit. The 40S small subunit contains 1 molecule of ribosomal RNA (18S rRNA) and 33 different proteins (encoded by 57 genes). The large 60S subunit contains 3 rRNA molecules (25S, 5.8S and 5S rRNA) and 46 different proteins (encoded by 81 genes) (PubMed:22096102, PubMed:9559554).</text>
</comment>
<comment type="subcellular location">
    <subcellularLocation>
        <location evidence="4">Cytoplasm</location>
    </subcellularLocation>
</comment>
<comment type="similarity">
    <text evidence="8">Belongs to the universal ribosomal protein uL15 family.</text>
</comment>
<protein>
    <recommendedName>
        <fullName evidence="6">Large ribosomal subunit protein uL15</fullName>
    </recommendedName>
    <alternativeName>
        <fullName evidence="7">60S ribosomal protein L28</fullName>
    </alternativeName>
    <alternativeName>
        <fullName>L27a</fullName>
    </alternativeName>
    <alternativeName>
        <fullName>L29</fullName>
    </alternativeName>
    <alternativeName>
        <fullName>RP44</fullName>
    </alternativeName>
    <alternativeName>
        <fullName>RP62</fullName>
    </alternativeName>
    <alternativeName>
        <fullName>YL24</fullName>
    </alternativeName>
</protein>